<gene>
    <name evidence="1" type="primary">clpP</name>
</gene>
<accession>A6MM61</accession>
<geneLocation type="chloroplast"/>
<feature type="chain" id="PRO_0000309291" description="ATP-dependent Clp protease proteolytic subunit">
    <location>
        <begin position="1"/>
        <end position="202"/>
    </location>
</feature>
<feature type="active site" description="Nucleophile" evidence="1">
    <location>
        <position position="101"/>
    </location>
</feature>
<feature type="active site" evidence="1">
    <location>
        <position position="126"/>
    </location>
</feature>
<comment type="function">
    <text evidence="1">Cleaves peptides in various proteins in a process that requires ATP hydrolysis. Has a chymotrypsin-like activity. Plays a major role in the degradation of misfolded proteins.</text>
</comment>
<comment type="catalytic activity">
    <reaction evidence="1">
        <text>Hydrolysis of proteins to small peptides in the presence of ATP and magnesium. alpha-casein is the usual test substrate. In the absence of ATP, only oligopeptides shorter than five residues are hydrolyzed (such as succinyl-Leu-Tyr-|-NHMec, and Leu-Tyr-Leu-|-Tyr-Trp, in which cleavage of the -Tyr-|-Leu- and -Tyr-|-Trp bonds also occurs).</text>
        <dbReference type="EC" id="3.4.21.92"/>
    </reaction>
</comment>
<comment type="subunit">
    <text>Component of the chloroplastic Clp protease core complex.</text>
</comment>
<comment type="subcellular location">
    <subcellularLocation>
        <location evidence="1">Plastid</location>
        <location evidence="1">Chloroplast stroma</location>
    </subcellularLocation>
</comment>
<comment type="similarity">
    <text evidence="1">Belongs to the peptidase S14 family.</text>
</comment>
<reference key="1">
    <citation type="journal article" date="2007" name="Mol. Phylogenet. Evol.">
        <title>Phylogenetic and evolutionary implications of complete chloroplast genome sequences of four early-diverging angiosperms: Buxus (Buxaceae), Chloranthus (Chloranthaceae), Dioscorea (Dioscoreaceae), and Illicium (Schisandraceae).</title>
        <authorList>
            <person name="Hansen D.R."/>
            <person name="Dastidar S.G."/>
            <person name="Cai Z."/>
            <person name="Penaflor C."/>
            <person name="Kuehl J.V."/>
            <person name="Boore J.L."/>
            <person name="Jansen R.K."/>
        </authorList>
    </citation>
    <scope>NUCLEOTIDE SEQUENCE [LARGE SCALE GENOMIC DNA]</scope>
</reference>
<name>CLPP_BUXMI</name>
<proteinExistence type="inferred from homology"/>
<protein>
    <recommendedName>
        <fullName evidence="1">ATP-dependent Clp protease proteolytic subunit</fullName>
        <ecNumber evidence="1">3.4.21.92</ecNumber>
    </recommendedName>
    <alternativeName>
        <fullName evidence="1">Endopeptidase Clp</fullName>
    </alternativeName>
</protein>
<evidence type="ECO:0000255" key="1">
    <source>
        <dbReference type="HAMAP-Rule" id="MF_00444"/>
    </source>
</evidence>
<organism>
    <name type="scientific">Buxus microphylla</name>
    <name type="common">Littleleaf boxwood</name>
    <name type="synonym">Japanese boxwood</name>
    <dbReference type="NCBI Taxonomy" id="153571"/>
    <lineage>
        <taxon>Eukaryota</taxon>
        <taxon>Viridiplantae</taxon>
        <taxon>Streptophyta</taxon>
        <taxon>Embryophyta</taxon>
        <taxon>Tracheophyta</taxon>
        <taxon>Spermatophyta</taxon>
        <taxon>Magnoliopsida</taxon>
        <taxon>Buxales</taxon>
        <taxon>Buxaceae</taxon>
        <taxon>Buxus</taxon>
    </lineage>
</organism>
<keyword id="KW-0150">Chloroplast</keyword>
<keyword id="KW-0378">Hydrolase</keyword>
<keyword id="KW-0934">Plastid</keyword>
<keyword id="KW-0645">Protease</keyword>
<keyword id="KW-0720">Serine protease</keyword>
<sequence>MPIGVPKVPFRNPGEEDAVWVDVYNRLHRERLLFLGQEVDSEISNQLIGLMVYLSIEDDTKDLYLFINSPGGWVIPGIAIYDTMQFVPPDIHTICMGLAASMGSFLLVGGEITKRLAFPHARVMIHQPASSFYEAQTGEFILEAEELLKLRETVTRVYVQRTGNPLWVVSEDMERDVFMSAIEAQAHGIVDLVAVENSGDLT</sequence>
<dbReference type="EC" id="3.4.21.92" evidence="1"/>
<dbReference type="EMBL" id="EF380351">
    <property type="protein sequence ID" value="ABQ45273.1"/>
    <property type="molecule type" value="Genomic_DNA"/>
</dbReference>
<dbReference type="RefSeq" id="YP_001294209.1">
    <property type="nucleotide sequence ID" value="NC_009599.1"/>
</dbReference>
<dbReference type="SMR" id="A6MM61"/>
<dbReference type="MEROPS" id="S14.002"/>
<dbReference type="GeneID" id="5236896"/>
<dbReference type="GO" id="GO:0009570">
    <property type="term" value="C:chloroplast stroma"/>
    <property type="evidence" value="ECO:0007669"/>
    <property type="project" value="UniProtKB-SubCell"/>
</dbReference>
<dbReference type="GO" id="GO:0009368">
    <property type="term" value="C:endopeptidase Clp complex"/>
    <property type="evidence" value="ECO:0007669"/>
    <property type="project" value="TreeGrafter"/>
</dbReference>
<dbReference type="GO" id="GO:0004176">
    <property type="term" value="F:ATP-dependent peptidase activity"/>
    <property type="evidence" value="ECO:0007669"/>
    <property type="project" value="InterPro"/>
</dbReference>
<dbReference type="GO" id="GO:0051117">
    <property type="term" value="F:ATPase binding"/>
    <property type="evidence" value="ECO:0007669"/>
    <property type="project" value="TreeGrafter"/>
</dbReference>
<dbReference type="GO" id="GO:0004252">
    <property type="term" value="F:serine-type endopeptidase activity"/>
    <property type="evidence" value="ECO:0007669"/>
    <property type="project" value="UniProtKB-UniRule"/>
</dbReference>
<dbReference type="GO" id="GO:0006515">
    <property type="term" value="P:protein quality control for misfolded or incompletely synthesized proteins"/>
    <property type="evidence" value="ECO:0007669"/>
    <property type="project" value="TreeGrafter"/>
</dbReference>
<dbReference type="CDD" id="cd07017">
    <property type="entry name" value="S14_ClpP_2"/>
    <property type="match status" value="1"/>
</dbReference>
<dbReference type="FunFam" id="3.90.226.10:FF:000006">
    <property type="entry name" value="ATP-dependent Clp protease proteolytic subunit"/>
    <property type="match status" value="1"/>
</dbReference>
<dbReference type="Gene3D" id="3.90.226.10">
    <property type="entry name" value="2-enoyl-CoA Hydratase, Chain A, domain 1"/>
    <property type="match status" value="1"/>
</dbReference>
<dbReference type="HAMAP" id="MF_00444">
    <property type="entry name" value="ClpP"/>
    <property type="match status" value="1"/>
</dbReference>
<dbReference type="InterPro" id="IPR001907">
    <property type="entry name" value="ClpP"/>
</dbReference>
<dbReference type="InterPro" id="IPR029045">
    <property type="entry name" value="ClpP/crotonase-like_dom_sf"/>
</dbReference>
<dbReference type="InterPro" id="IPR023562">
    <property type="entry name" value="ClpP/TepA"/>
</dbReference>
<dbReference type="InterPro" id="IPR033135">
    <property type="entry name" value="ClpP_His_AS"/>
</dbReference>
<dbReference type="InterPro" id="IPR018215">
    <property type="entry name" value="ClpP_Ser_AS"/>
</dbReference>
<dbReference type="PANTHER" id="PTHR10381">
    <property type="entry name" value="ATP-DEPENDENT CLP PROTEASE PROTEOLYTIC SUBUNIT"/>
    <property type="match status" value="1"/>
</dbReference>
<dbReference type="PANTHER" id="PTHR10381:SF15">
    <property type="entry name" value="CHLOROPLASTIC ATP-DEPENDENT CLP PROTEASE PROTEOLYTIC SUBUNIT 1"/>
    <property type="match status" value="1"/>
</dbReference>
<dbReference type="Pfam" id="PF00574">
    <property type="entry name" value="CLP_protease"/>
    <property type="match status" value="1"/>
</dbReference>
<dbReference type="PRINTS" id="PR00127">
    <property type="entry name" value="CLPPROTEASEP"/>
</dbReference>
<dbReference type="SUPFAM" id="SSF52096">
    <property type="entry name" value="ClpP/crotonase"/>
    <property type="match status" value="1"/>
</dbReference>
<dbReference type="PROSITE" id="PS00382">
    <property type="entry name" value="CLP_PROTEASE_HIS"/>
    <property type="match status" value="1"/>
</dbReference>
<dbReference type="PROSITE" id="PS00381">
    <property type="entry name" value="CLP_PROTEASE_SER"/>
    <property type="match status" value="1"/>
</dbReference>